<proteinExistence type="inferred from homology"/>
<protein>
    <recommendedName>
        <fullName evidence="1">Large ribosomal subunit protein uL2</fullName>
    </recommendedName>
    <alternativeName>
        <fullName evidence="3">50S ribosomal protein L2</fullName>
    </alternativeName>
</protein>
<name>RL2_MYCVP</name>
<reference key="1">
    <citation type="submission" date="2006-12" db="EMBL/GenBank/DDBJ databases">
        <title>Complete sequence of Mycobacterium vanbaalenii PYR-1.</title>
        <authorList>
            <consortium name="US DOE Joint Genome Institute"/>
            <person name="Copeland A."/>
            <person name="Lucas S."/>
            <person name="Lapidus A."/>
            <person name="Barry K."/>
            <person name="Detter J.C."/>
            <person name="Glavina del Rio T."/>
            <person name="Hammon N."/>
            <person name="Israni S."/>
            <person name="Dalin E."/>
            <person name="Tice H."/>
            <person name="Pitluck S."/>
            <person name="Singan V."/>
            <person name="Schmutz J."/>
            <person name="Larimer F."/>
            <person name="Land M."/>
            <person name="Hauser L."/>
            <person name="Kyrpides N."/>
            <person name="Anderson I.J."/>
            <person name="Miller C."/>
            <person name="Richardson P."/>
        </authorList>
    </citation>
    <scope>NUCLEOTIDE SEQUENCE [LARGE SCALE GENOMIC DNA]</scope>
    <source>
        <strain>DSM 7251 / JCM 13017 / BCRC 16820 / KCTC 9966 / NRRL B-24157 / PYR-1</strain>
    </source>
</reference>
<organism>
    <name type="scientific">Mycolicibacterium vanbaalenii (strain DSM 7251 / JCM 13017 / BCRC 16820 / KCTC 9966 / NRRL B-24157 / PYR-1)</name>
    <name type="common">Mycobacterium vanbaalenii</name>
    <dbReference type="NCBI Taxonomy" id="350058"/>
    <lineage>
        <taxon>Bacteria</taxon>
        <taxon>Bacillati</taxon>
        <taxon>Actinomycetota</taxon>
        <taxon>Actinomycetes</taxon>
        <taxon>Mycobacteriales</taxon>
        <taxon>Mycobacteriaceae</taxon>
        <taxon>Mycolicibacterium</taxon>
    </lineage>
</organism>
<keyword id="KW-0687">Ribonucleoprotein</keyword>
<keyword id="KW-0689">Ribosomal protein</keyword>
<keyword id="KW-0694">RNA-binding</keyword>
<keyword id="KW-0699">rRNA-binding</keyword>
<dbReference type="EMBL" id="CP000511">
    <property type="protein sequence ID" value="ABM12142.1"/>
    <property type="molecule type" value="Genomic_DNA"/>
</dbReference>
<dbReference type="RefSeq" id="WP_011778573.1">
    <property type="nucleotide sequence ID" value="NZ_JACKSD010000069.1"/>
</dbReference>
<dbReference type="SMR" id="A1T4P2"/>
<dbReference type="STRING" id="350058.Mvan_1308"/>
<dbReference type="KEGG" id="mva:Mvan_1308"/>
<dbReference type="eggNOG" id="COG0090">
    <property type="taxonomic scope" value="Bacteria"/>
</dbReference>
<dbReference type="HOGENOM" id="CLU_036235_2_1_11"/>
<dbReference type="Proteomes" id="UP000009159">
    <property type="component" value="Chromosome"/>
</dbReference>
<dbReference type="GO" id="GO:0015934">
    <property type="term" value="C:large ribosomal subunit"/>
    <property type="evidence" value="ECO:0007669"/>
    <property type="project" value="InterPro"/>
</dbReference>
<dbReference type="GO" id="GO:0019843">
    <property type="term" value="F:rRNA binding"/>
    <property type="evidence" value="ECO:0007669"/>
    <property type="project" value="UniProtKB-UniRule"/>
</dbReference>
<dbReference type="GO" id="GO:0003735">
    <property type="term" value="F:structural constituent of ribosome"/>
    <property type="evidence" value="ECO:0007669"/>
    <property type="project" value="InterPro"/>
</dbReference>
<dbReference type="GO" id="GO:0016740">
    <property type="term" value="F:transferase activity"/>
    <property type="evidence" value="ECO:0007669"/>
    <property type="project" value="InterPro"/>
</dbReference>
<dbReference type="GO" id="GO:0002181">
    <property type="term" value="P:cytoplasmic translation"/>
    <property type="evidence" value="ECO:0007669"/>
    <property type="project" value="TreeGrafter"/>
</dbReference>
<dbReference type="FunFam" id="2.30.30.30:FF:000001">
    <property type="entry name" value="50S ribosomal protein L2"/>
    <property type="match status" value="1"/>
</dbReference>
<dbReference type="FunFam" id="2.40.50.140:FF:000003">
    <property type="entry name" value="50S ribosomal protein L2"/>
    <property type="match status" value="1"/>
</dbReference>
<dbReference type="FunFam" id="4.10.950.10:FF:000001">
    <property type="entry name" value="50S ribosomal protein L2"/>
    <property type="match status" value="1"/>
</dbReference>
<dbReference type="Gene3D" id="2.30.30.30">
    <property type="match status" value="1"/>
</dbReference>
<dbReference type="Gene3D" id="2.40.50.140">
    <property type="entry name" value="Nucleic acid-binding proteins"/>
    <property type="match status" value="1"/>
</dbReference>
<dbReference type="Gene3D" id="4.10.950.10">
    <property type="entry name" value="Ribosomal protein L2, domain 3"/>
    <property type="match status" value="1"/>
</dbReference>
<dbReference type="HAMAP" id="MF_01320_B">
    <property type="entry name" value="Ribosomal_uL2_B"/>
    <property type="match status" value="1"/>
</dbReference>
<dbReference type="InterPro" id="IPR012340">
    <property type="entry name" value="NA-bd_OB-fold"/>
</dbReference>
<dbReference type="InterPro" id="IPR014722">
    <property type="entry name" value="Rib_uL2_dom2"/>
</dbReference>
<dbReference type="InterPro" id="IPR002171">
    <property type="entry name" value="Ribosomal_uL2"/>
</dbReference>
<dbReference type="InterPro" id="IPR005880">
    <property type="entry name" value="Ribosomal_uL2_bac/org-type"/>
</dbReference>
<dbReference type="InterPro" id="IPR022669">
    <property type="entry name" value="Ribosomal_uL2_C"/>
</dbReference>
<dbReference type="InterPro" id="IPR022671">
    <property type="entry name" value="Ribosomal_uL2_CS"/>
</dbReference>
<dbReference type="InterPro" id="IPR014726">
    <property type="entry name" value="Ribosomal_uL2_dom3"/>
</dbReference>
<dbReference type="InterPro" id="IPR022666">
    <property type="entry name" value="Ribosomal_uL2_RNA-bd_dom"/>
</dbReference>
<dbReference type="InterPro" id="IPR008991">
    <property type="entry name" value="Translation_prot_SH3-like_sf"/>
</dbReference>
<dbReference type="NCBIfam" id="TIGR01171">
    <property type="entry name" value="rplB_bact"/>
    <property type="match status" value="1"/>
</dbReference>
<dbReference type="PANTHER" id="PTHR13691:SF5">
    <property type="entry name" value="LARGE RIBOSOMAL SUBUNIT PROTEIN UL2M"/>
    <property type="match status" value="1"/>
</dbReference>
<dbReference type="PANTHER" id="PTHR13691">
    <property type="entry name" value="RIBOSOMAL PROTEIN L2"/>
    <property type="match status" value="1"/>
</dbReference>
<dbReference type="Pfam" id="PF00181">
    <property type="entry name" value="Ribosomal_L2"/>
    <property type="match status" value="1"/>
</dbReference>
<dbReference type="Pfam" id="PF03947">
    <property type="entry name" value="Ribosomal_L2_C"/>
    <property type="match status" value="1"/>
</dbReference>
<dbReference type="PIRSF" id="PIRSF002158">
    <property type="entry name" value="Ribosomal_L2"/>
    <property type="match status" value="1"/>
</dbReference>
<dbReference type="SMART" id="SM01383">
    <property type="entry name" value="Ribosomal_L2"/>
    <property type="match status" value="1"/>
</dbReference>
<dbReference type="SMART" id="SM01382">
    <property type="entry name" value="Ribosomal_L2_C"/>
    <property type="match status" value="1"/>
</dbReference>
<dbReference type="SUPFAM" id="SSF50249">
    <property type="entry name" value="Nucleic acid-binding proteins"/>
    <property type="match status" value="1"/>
</dbReference>
<dbReference type="SUPFAM" id="SSF50104">
    <property type="entry name" value="Translation proteins SH3-like domain"/>
    <property type="match status" value="1"/>
</dbReference>
<dbReference type="PROSITE" id="PS00467">
    <property type="entry name" value="RIBOSOMAL_L2"/>
    <property type="match status" value="1"/>
</dbReference>
<gene>
    <name evidence="1" type="primary">rplB</name>
    <name type="ordered locus">Mvan_1308</name>
</gene>
<accession>A1T4P2</accession>
<feature type="chain" id="PRO_0000309964" description="Large ribosomal subunit protein uL2">
    <location>
        <begin position="1"/>
        <end position="278"/>
    </location>
</feature>
<feature type="region of interest" description="Disordered" evidence="2">
    <location>
        <begin position="1"/>
        <end position="58"/>
    </location>
</feature>
<feature type="region of interest" description="Disordered" evidence="2">
    <location>
        <begin position="224"/>
        <end position="278"/>
    </location>
</feature>
<feature type="compositionally biased region" description="Basic and acidic residues" evidence="2">
    <location>
        <begin position="23"/>
        <end position="33"/>
    </location>
</feature>
<feature type="compositionally biased region" description="Basic residues" evidence="2">
    <location>
        <begin position="37"/>
        <end position="58"/>
    </location>
</feature>
<feature type="compositionally biased region" description="Basic and acidic residues" evidence="2">
    <location>
        <begin position="253"/>
        <end position="268"/>
    </location>
</feature>
<feature type="compositionally biased region" description="Basic residues" evidence="2">
    <location>
        <begin position="269"/>
        <end position="278"/>
    </location>
</feature>
<evidence type="ECO:0000255" key="1">
    <source>
        <dbReference type="HAMAP-Rule" id="MF_01320"/>
    </source>
</evidence>
<evidence type="ECO:0000256" key="2">
    <source>
        <dbReference type="SAM" id="MobiDB-lite"/>
    </source>
</evidence>
<evidence type="ECO:0000305" key="3"/>
<sequence>MAIRKYKPTTPGRRGSSVSDFAEITRDHPEKSLVRPLHGRGGRNAHGRITTRHKGGGHKRAYRVIDFRRHDKDGVNAKVAHIEYDPNRTANIALLHYLDGEKRYIIAPQGLKQGAIVESGANADIKPGNNLPLRNIPAGTLVHAVELRPGGGAKMARSAGASIQLLGKEGSYASLRMPSGEIRRVDVRCRATVGEVGNAEQANINWGKAGRMRWKGKRPTVRGVVMNPVDHPHGGGEGKTSGGRHPVSPWGKPEGRTRKPKKASDKLIVRRRRTGKKR</sequence>
<comment type="function">
    <text evidence="1">One of the primary rRNA binding proteins. Required for association of the 30S and 50S subunits to form the 70S ribosome, for tRNA binding and peptide bond formation. It has been suggested to have peptidyltransferase activity; this is somewhat controversial. Makes several contacts with the 16S rRNA in the 70S ribosome.</text>
</comment>
<comment type="subunit">
    <text evidence="1">Part of the 50S ribosomal subunit. Forms a bridge to the 30S subunit in the 70S ribosome.</text>
</comment>
<comment type="similarity">
    <text evidence="1">Belongs to the universal ribosomal protein uL2 family.</text>
</comment>